<protein>
    <recommendedName>
        <fullName evidence="2">Outer surface protein A</fullName>
    </recommendedName>
</protein>
<proteinExistence type="inferred from homology"/>
<accession>C6C2D6</accession>
<accession>P0C926</accession>
<accession>P14013</accession>
<accession>Q44882</accession>
<accession>Q44964</accession>
<accession>Q44967</accession>
<accession>Q44969</accession>
<accession>Q44971</accession>
<accession>Q57123</accession>
<accession>Q57272</accession>
<feature type="signal peptide" evidence="1">
    <location>
        <begin position="1"/>
        <end position="16"/>
    </location>
</feature>
<feature type="chain" id="PRO_0000406313" description="Outer surface protein A" evidence="1">
    <location>
        <begin position="17"/>
        <end position="273"/>
    </location>
</feature>
<feature type="lipid moiety-binding region" description="N-palmitoyl cysteine" evidence="1">
    <location>
        <position position="17"/>
    </location>
</feature>
<feature type="lipid moiety-binding region" description="S-diacylglycerol cysteine" evidence="1">
    <location>
        <position position="17"/>
    </location>
</feature>
<dbReference type="EMBL" id="M57248">
    <property type="status" value="NOT_ANNOTATED_CDS"/>
    <property type="molecule type" value="Genomic_DNA"/>
</dbReference>
<dbReference type="EMBL" id="CP001651">
    <property type="protein sequence ID" value="ACS94765.1"/>
    <property type="molecule type" value="Genomic_DNA"/>
</dbReference>
<dbReference type="RefSeq" id="WP_012665570.1">
    <property type="nucleotide sequence ID" value="NC_013130.1"/>
</dbReference>
<dbReference type="BMRB" id="C6C2D6"/>
<dbReference type="SMR" id="C6C2D6"/>
<dbReference type="GeneID" id="56568596"/>
<dbReference type="KEGG" id="bbn:BbuN40_A15"/>
<dbReference type="HOGENOM" id="CLU_1014382_0_0_12"/>
<dbReference type="GO" id="GO:0009279">
    <property type="term" value="C:cell outer membrane"/>
    <property type="evidence" value="ECO:0007669"/>
    <property type="project" value="UniProtKB-SubCell"/>
</dbReference>
<dbReference type="GO" id="GO:0009986">
    <property type="term" value="C:cell surface"/>
    <property type="evidence" value="ECO:0007669"/>
    <property type="project" value="UniProtKB-SubCell"/>
</dbReference>
<dbReference type="FunFam" id="2.40.128.160:FF:000001">
    <property type="entry name" value="Outer surface protein A"/>
    <property type="match status" value="1"/>
</dbReference>
<dbReference type="FunFam" id="3.90.930.1:FF:000001">
    <property type="entry name" value="Outer surface protein A"/>
    <property type="match status" value="1"/>
</dbReference>
<dbReference type="Gene3D" id="3.90.930.1">
    <property type="match status" value="1"/>
</dbReference>
<dbReference type="Gene3D" id="2.40.128.160">
    <property type="entry name" value="C1 set domains (antibody constant domain-like)"/>
    <property type="match status" value="1"/>
</dbReference>
<dbReference type="InterPro" id="IPR001809">
    <property type="entry name" value="OM_lipoprot_Borrelia"/>
</dbReference>
<dbReference type="InterPro" id="IPR023322">
    <property type="entry name" value="OM_lipoprot_dom_sf"/>
</dbReference>
<dbReference type="Pfam" id="PF00820">
    <property type="entry name" value="Lipoprotein_1"/>
    <property type="match status" value="1"/>
</dbReference>
<dbReference type="PRINTS" id="PR00968">
    <property type="entry name" value="OUTRSURFACE"/>
</dbReference>
<dbReference type="SUPFAM" id="SSF51087">
    <property type="entry name" value="Outer surface protein"/>
    <property type="match status" value="1"/>
</dbReference>
<dbReference type="PROSITE" id="PS51257">
    <property type="entry name" value="PROKAR_LIPOPROTEIN"/>
    <property type="match status" value="1"/>
</dbReference>
<gene>
    <name evidence="2" type="primary">ospA</name>
    <name type="ordered locus">BbuN40_A15</name>
</gene>
<sequence>MKKYLLGIGLILALIACKQNVSSLDEKNSVSVDLPGEMNVLVSKEKNKDGKYDLIATVDKLELKGTSDKNNGSGVLEGVKADKSKVKLTISDDLGQTTLEVFKEDGKTLVSKKVTSKDKSSTEEKFNEKGEVSEKIITRADGTRLEYTEIKSDGSGKAKEVLKGYVLEGTLTAEKTTLVVKEGTVTLSKNISKSGEVSVELNDTDSSAATKKTAAWNSGTSTLTITVNSKKTKDLVFTKENTITVQQYDSNGTKLEGSAVEITKLDEIKNALK</sequence>
<reference evidence="6" key="1">
    <citation type="journal article" date="1992" name="J. Immunol.">
        <title>Borrelia burgdorferi strain 25015: characterization of outer surface protein A and vaccination against infection.</title>
        <authorList>
            <person name="Fikrig E."/>
            <person name="Barthold S.W."/>
            <person name="Persing D.H."/>
            <person name="Sun X."/>
            <person name="Kantor F.S."/>
            <person name="Flavell R.A."/>
        </authorList>
    </citation>
    <scope>NUCLEOTIDE SEQUENCE [GENOMIC DNA]</scope>
    <source>
        <strain>N40</strain>
        <plasmid>lp54</plasmid>
    </source>
</reference>
<reference evidence="5" key="2">
    <citation type="journal article" date="2011" name="J. Bacteriol.">
        <title>Whole-genome sequences of thirteen isolates of Borrelia burgdorferi.</title>
        <authorList>
            <person name="Schutzer S.E."/>
            <person name="Fraser-Liggett C.M."/>
            <person name="Casjens S.R."/>
            <person name="Qiu W.G."/>
            <person name="Dunn J.J."/>
            <person name="Mongodin E.F."/>
            <person name="Luft B.J."/>
        </authorList>
    </citation>
    <scope>NUCLEOTIDE SEQUENCE [LARGE SCALE GENOMIC DNA]</scope>
    <source>
        <strain>N40</strain>
        <plasmid>N40_lp54</plasmid>
    </source>
</reference>
<geneLocation type="plasmid">
    <name>lp54</name>
</geneLocation>
<geneLocation type="plasmid">
    <name>N40_lp54</name>
</geneLocation>
<keyword id="KW-0998">Cell outer membrane</keyword>
<keyword id="KW-0449">Lipoprotein</keyword>
<keyword id="KW-0472">Membrane</keyword>
<keyword id="KW-0564">Palmitate</keyword>
<keyword id="KW-0614">Plasmid</keyword>
<keyword id="KW-0732">Signal</keyword>
<evidence type="ECO:0000255" key="1">
    <source>
        <dbReference type="PROSITE-ProRule" id="PRU00303"/>
    </source>
</evidence>
<evidence type="ECO:0000303" key="2">
    <source>
    </source>
</evidence>
<evidence type="ECO:0000305" key="3"/>
<evidence type="ECO:0000305" key="4">
    <source>
    </source>
</evidence>
<evidence type="ECO:0000312" key="5">
    <source>
        <dbReference type="EMBL" id="ACS94765.1"/>
    </source>
</evidence>
<evidence type="ECO:0000312" key="6">
    <source>
        <dbReference type="EMBL" id="M57248"/>
    </source>
</evidence>
<organism>
    <name type="scientific">Borreliella burgdorferi (strain N40)</name>
    <name type="common">Borrelia burgdorferi</name>
    <dbReference type="NCBI Taxonomy" id="521007"/>
    <lineage>
        <taxon>Bacteria</taxon>
        <taxon>Pseudomonadati</taxon>
        <taxon>Spirochaetota</taxon>
        <taxon>Spirochaetia</taxon>
        <taxon>Spirochaetales</taxon>
        <taxon>Borreliaceae</taxon>
        <taxon>Borreliella</taxon>
    </lineage>
</organism>
<name>OSPA_BORBN</name>
<comment type="subcellular location">
    <subcellularLocation>
        <location evidence="4">Cell outer membrane</location>
        <topology evidence="1">Lipid-anchor</topology>
    </subcellularLocation>
    <subcellularLocation>
        <location evidence="4">Cell surface</location>
    </subcellularLocation>
</comment>
<comment type="similarity">
    <text evidence="3">Belongs to the OspA lipoprotein family.</text>
</comment>